<gene>
    <name evidence="1" type="primary">smrB</name>
    <name type="ordered locus">SF2406</name>
    <name type="ordered locus">S2541</name>
</gene>
<comment type="function">
    <text evidence="1">Acts as a ribosome collision sensor. Detects stalled/collided disomes (pairs of ribosomes where the leading ribosome is stalled and a second ribosome has collided with it) and endonucleolytically cleaves mRNA at the 5' boundary of the stalled ribosome. Stalled/collided disomes form a new interface (primarily via the 30S subunits) that binds SmrB. Cleaved mRNA becomes available for tmRNA ligation, leading to ribosomal subunit dissociation and rescue of stalled ribosomes.</text>
</comment>
<comment type="subunit">
    <text evidence="1">Associates with collided ribosomes, but not with correctly translating polysomes.</text>
</comment>
<comment type="similarity">
    <text evidence="1">Belongs to the SmrB family.</text>
</comment>
<protein>
    <recommendedName>
        <fullName evidence="1">Ribosome rescue factor SmrB</fullName>
        <ecNumber evidence="1">3.1.-.-</ecNumber>
    </recommendedName>
</protein>
<sequence>MKKKTTLSEEDQALFRQLMAGTRKIKQDTIVHRPQRKKISEVPVKRLIQEQADASHYFSDEFQPLLNTEGPVKYVRPDVSHFEAKKLRRGDYSPELFLDLHGLTQLQAKQELGALIAACRREHVFCACVMHGHGKHILKQQTPLWLAQHPHVMAFHQAPKEYGGDAALLVLIEVEEWLPPELP</sequence>
<reference key="1">
    <citation type="journal article" date="2002" name="Nucleic Acids Res.">
        <title>Genome sequence of Shigella flexneri 2a: insights into pathogenicity through comparison with genomes of Escherichia coli K12 and O157.</title>
        <authorList>
            <person name="Jin Q."/>
            <person name="Yuan Z."/>
            <person name="Xu J."/>
            <person name="Wang Y."/>
            <person name="Shen Y."/>
            <person name="Lu W."/>
            <person name="Wang J."/>
            <person name="Liu H."/>
            <person name="Yang J."/>
            <person name="Yang F."/>
            <person name="Zhang X."/>
            <person name="Zhang J."/>
            <person name="Yang G."/>
            <person name="Wu H."/>
            <person name="Qu D."/>
            <person name="Dong J."/>
            <person name="Sun L."/>
            <person name="Xue Y."/>
            <person name="Zhao A."/>
            <person name="Gao Y."/>
            <person name="Zhu J."/>
            <person name="Kan B."/>
            <person name="Ding K."/>
            <person name="Chen S."/>
            <person name="Cheng H."/>
            <person name="Yao Z."/>
            <person name="He B."/>
            <person name="Chen R."/>
            <person name="Ma D."/>
            <person name="Qiang B."/>
            <person name="Wen Y."/>
            <person name="Hou Y."/>
            <person name="Yu J."/>
        </authorList>
    </citation>
    <scope>NUCLEOTIDE SEQUENCE [LARGE SCALE GENOMIC DNA]</scope>
    <source>
        <strain>301 / Serotype 2a</strain>
    </source>
</reference>
<reference key="2">
    <citation type="journal article" date="2003" name="Infect. Immun.">
        <title>Complete genome sequence and comparative genomics of Shigella flexneri serotype 2a strain 2457T.</title>
        <authorList>
            <person name="Wei J."/>
            <person name="Goldberg M.B."/>
            <person name="Burland V."/>
            <person name="Venkatesan M.M."/>
            <person name="Deng W."/>
            <person name="Fournier G."/>
            <person name="Mayhew G.F."/>
            <person name="Plunkett G. III"/>
            <person name="Rose D.J."/>
            <person name="Darling A."/>
            <person name="Mau B."/>
            <person name="Perna N.T."/>
            <person name="Payne S.M."/>
            <person name="Runyen-Janecky L.J."/>
            <person name="Zhou S."/>
            <person name="Schwartz D.C."/>
            <person name="Blattner F.R."/>
        </authorList>
    </citation>
    <scope>NUCLEOTIDE SEQUENCE [LARGE SCALE GENOMIC DNA]</scope>
    <source>
        <strain>ATCC 700930 / 2457T / Serotype 2a</strain>
    </source>
</reference>
<proteinExistence type="inferred from homology"/>
<accession>P0A8B4</accession>
<accession>P77458</accession>
<organism>
    <name type="scientific">Shigella flexneri</name>
    <dbReference type="NCBI Taxonomy" id="623"/>
    <lineage>
        <taxon>Bacteria</taxon>
        <taxon>Pseudomonadati</taxon>
        <taxon>Pseudomonadota</taxon>
        <taxon>Gammaproteobacteria</taxon>
        <taxon>Enterobacterales</taxon>
        <taxon>Enterobacteriaceae</taxon>
        <taxon>Shigella</taxon>
    </lineage>
</organism>
<evidence type="ECO:0000255" key="1">
    <source>
        <dbReference type="HAMAP-Rule" id="MF_01042"/>
    </source>
</evidence>
<keyword id="KW-0255">Endonuclease</keyword>
<keyword id="KW-0378">Hydrolase</keyword>
<keyword id="KW-0540">Nuclease</keyword>
<keyword id="KW-1185">Reference proteome</keyword>
<keyword id="KW-0694">RNA-binding</keyword>
<keyword id="KW-0699">rRNA-binding</keyword>
<feature type="chain" id="PRO_0000214562" description="Ribosome rescue factor SmrB">
    <location>
        <begin position="1"/>
        <end position="183"/>
    </location>
</feature>
<feature type="domain" description="Smr" evidence="1">
    <location>
        <begin position="98"/>
        <end position="173"/>
    </location>
</feature>
<dbReference type="EC" id="3.1.-.-" evidence="1"/>
<dbReference type="EMBL" id="AE005674">
    <property type="protein sequence ID" value="AAN43920.1"/>
    <property type="molecule type" value="Genomic_DNA"/>
</dbReference>
<dbReference type="EMBL" id="AE014073">
    <property type="protein sequence ID" value="AAP17738.1"/>
    <property type="molecule type" value="Genomic_DNA"/>
</dbReference>
<dbReference type="RefSeq" id="NP_708213.1">
    <property type="nucleotide sequence ID" value="NC_004337.2"/>
</dbReference>
<dbReference type="RefSeq" id="WP_000730806.1">
    <property type="nucleotide sequence ID" value="NZ_WPGW01000016.1"/>
</dbReference>
<dbReference type="SMR" id="P0A8B4"/>
<dbReference type="STRING" id="198214.SF2406"/>
<dbReference type="PaxDb" id="198214-SF2406"/>
<dbReference type="GeneID" id="1027302"/>
<dbReference type="GeneID" id="93774844"/>
<dbReference type="KEGG" id="sfl:SF2406"/>
<dbReference type="KEGG" id="sfx:S2541"/>
<dbReference type="PATRIC" id="fig|198214.7.peg.2874"/>
<dbReference type="HOGENOM" id="CLU_055978_4_0_6"/>
<dbReference type="Proteomes" id="UP000001006">
    <property type="component" value="Chromosome"/>
</dbReference>
<dbReference type="Proteomes" id="UP000002673">
    <property type="component" value="Chromosome"/>
</dbReference>
<dbReference type="GO" id="GO:0004521">
    <property type="term" value="F:RNA endonuclease activity"/>
    <property type="evidence" value="ECO:0007669"/>
    <property type="project" value="UniProtKB-UniRule"/>
</dbReference>
<dbReference type="GO" id="GO:0019843">
    <property type="term" value="F:rRNA binding"/>
    <property type="evidence" value="ECO:0007669"/>
    <property type="project" value="UniProtKB-UniRule"/>
</dbReference>
<dbReference type="GO" id="GO:0072344">
    <property type="term" value="P:rescue of stalled ribosome"/>
    <property type="evidence" value="ECO:0007669"/>
    <property type="project" value="UniProtKB-UniRule"/>
</dbReference>
<dbReference type="Gene3D" id="3.30.1370.110">
    <property type="match status" value="1"/>
</dbReference>
<dbReference type="HAMAP" id="MF_01042">
    <property type="entry name" value="SmrB"/>
    <property type="match status" value="1"/>
</dbReference>
<dbReference type="InterPro" id="IPR002625">
    <property type="entry name" value="Smr_dom"/>
</dbReference>
<dbReference type="InterPro" id="IPR036063">
    <property type="entry name" value="Smr_dom_sf"/>
</dbReference>
<dbReference type="InterPro" id="IPR022990">
    <property type="entry name" value="SmrB-like"/>
</dbReference>
<dbReference type="NCBIfam" id="NF003432">
    <property type="entry name" value="PRK04946.1"/>
    <property type="match status" value="1"/>
</dbReference>
<dbReference type="PANTHER" id="PTHR35562">
    <property type="entry name" value="DNA ENDONUCLEASE SMRA-RELATED"/>
    <property type="match status" value="1"/>
</dbReference>
<dbReference type="PANTHER" id="PTHR35562:SF1">
    <property type="entry name" value="UPF0115 PROTEIN YFCN"/>
    <property type="match status" value="1"/>
</dbReference>
<dbReference type="Pfam" id="PF01713">
    <property type="entry name" value="Smr"/>
    <property type="match status" value="1"/>
</dbReference>
<dbReference type="SMART" id="SM00463">
    <property type="entry name" value="SMR"/>
    <property type="match status" value="1"/>
</dbReference>
<dbReference type="SUPFAM" id="SSF160443">
    <property type="entry name" value="SMR domain-like"/>
    <property type="match status" value="1"/>
</dbReference>
<dbReference type="PROSITE" id="PS50828">
    <property type="entry name" value="SMR"/>
    <property type="match status" value="1"/>
</dbReference>
<name>SMRB_SHIFL</name>